<organism>
    <name type="scientific">Listeria innocua serovar 6a (strain ATCC BAA-680 / CLIP 11262)</name>
    <dbReference type="NCBI Taxonomy" id="272626"/>
    <lineage>
        <taxon>Bacteria</taxon>
        <taxon>Bacillati</taxon>
        <taxon>Bacillota</taxon>
        <taxon>Bacilli</taxon>
        <taxon>Bacillales</taxon>
        <taxon>Listeriaceae</taxon>
        <taxon>Listeria</taxon>
    </lineage>
</organism>
<comment type="catalytic activity">
    <reaction evidence="1">
        <text>diphosphate + H2O = 2 phosphate + H(+)</text>
        <dbReference type="Rhea" id="RHEA:24576"/>
        <dbReference type="ChEBI" id="CHEBI:15377"/>
        <dbReference type="ChEBI" id="CHEBI:15378"/>
        <dbReference type="ChEBI" id="CHEBI:33019"/>
        <dbReference type="ChEBI" id="CHEBI:43474"/>
        <dbReference type="EC" id="3.6.1.1"/>
    </reaction>
</comment>
<comment type="cofactor">
    <cofactor evidence="1">
        <name>Mn(2+)</name>
        <dbReference type="ChEBI" id="CHEBI:29035"/>
    </cofactor>
    <text evidence="1">Binds 2 manganese ions per subunit.</text>
</comment>
<comment type="subcellular location">
    <subcellularLocation>
        <location evidence="1">Cytoplasm</location>
    </subcellularLocation>
</comment>
<comment type="similarity">
    <text evidence="1">Belongs to the PPase class C family.</text>
</comment>
<accession>Q92BR1</accession>
<evidence type="ECO:0000255" key="1">
    <source>
        <dbReference type="HAMAP-Rule" id="MF_00207"/>
    </source>
</evidence>
<proteinExistence type="inferred from homology"/>
<reference key="1">
    <citation type="journal article" date="2001" name="Science">
        <title>Comparative genomics of Listeria species.</title>
        <authorList>
            <person name="Glaser P."/>
            <person name="Frangeul L."/>
            <person name="Buchrieser C."/>
            <person name="Rusniok C."/>
            <person name="Amend A."/>
            <person name="Baquero F."/>
            <person name="Berche P."/>
            <person name="Bloecker H."/>
            <person name="Brandt P."/>
            <person name="Chakraborty T."/>
            <person name="Charbit A."/>
            <person name="Chetouani F."/>
            <person name="Couve E."/>
            <person name="de Daruvar A."/>
            <person name="Dehoux P."/>
            <person name="Domann E."/>
            <person name="Dominguez-Bernal G."/>
            <person name="Duchaud E."/>
            <person name="Durant L."/>
            <person name="Dussurget O."/>
            <person name="Entian K.-D."/>
            <person name="Fsihi H."/>
            <person name="Garcia-del Portillo F."/>
            <person name="Garrido P."/>
            <person name="Gautier L."/>
            <person name="Goebel W."/>
            <person name="Gomez-Lopez N."/>
            <person name="Hain T."/>
            <person name="Hauf J."/>
            <person name="Jackson D."/>
            <person name="Jones L.-M."/>
            <person name="Kaerst U."/>
            <person name="Kreft J."/>
            <person name="Kuhn M."/>
            <person name="Kunst F."/>
            <person name="Kurapkat G."/>
            <person name="Madueno E."/>
            <person name="Maitournam A."/>
            <person name="Mata Vicente J."/>
            <person name="Ng E."/>
            <person name="Nedjari H."/>
            <person name="Nordsiek G."/>
            <person name="Novella S."/>
            <person name="de Pablos B."/>
            <person name="Perez-Diaz J.-C."/>
            <person name="Purcell R."/>
            <person name="Remmel B."/>
            <person name="Rose M."/>
            <person name="Schlueter T."/>
            <person name="Simoes N."/>
            <person name="Tierrez A."/>
            <person name="Vazquez-Boland J.-A."/>
            <person name="Voss H."/>
            <person name="Wehland J."/>
            <person name="Cossart P."/>
        </authorList>
    </citation>
    <scope>NUCLEOTIDE SEQUENCE [LARGE SCALE GENOMIC DNA]</scope>
    <source>
        <strain>ATCC BAA-680 / CLIP 11262</strain>
    </source>
</reference>
<gene>
    <name evidence="1" type="primary">ppaC</name>
    <name type="ordered locus">lin1486</name>
</gene>
<dbReference type="EC" id="3.6.1.1" evidence="1"/>
<dbReference type="EMBL" id="AL596168">
    <property type="protein sequence ID" value="CAC96717.1"/>
    <property type="molecule type" value="Genomic_DNA"/>
</dbReference>
<dbReference type="PIR" id="AE1618">
    <property type="entry name" value="AE1618"/>
</dbReference>
<dbReference type="RefSeq" id="WP_010991556.1">
    <property type="nucleotide sequence ID" value="NC_003212.1"/>
</dbReference>
<dbReference type="SMR" id="Q92BR1"/>
<dbReference type="STRING" id="272626.gene:17565817"/>
<dbReference type="GeneID" id="93234867"/>
<dbReference type="KEGG" id="lin:lin1486"/>
<dbReference type="eggNOG" id="COG1227">
    <property type="taxonomic scope" value="Bacteria"/>
</dbReference>
<dbReference type="HOGENOM" id="CLU_025243_0_1_9"/>
<dbReference type="OrthoDB" id="9766150at2"/>
<dbReference type="Proteomes" id="UP000002513">
    <property type="component" value="Chromosome"/>
</dbReference>
<dbReference type="GO" id="GO:0005737">
    <property type="term" value="C:cytoplasm"/>
    <property type="evidence" value="ECO:0007669"/>
    <property type="project" value="UniProtKB-SubCell"/>
</dbReference>
<dbReference type="GO" id="GO:0004427">
    <property type="term" value="F:inorganic diphosphate phosphatase activity"/>
    <property type="evidence" value="ECO:0007669"/>
    <property type="project" value="UniProtKB-UniRule"/>
</dbReference>
<dbReference type="GO" id="GO:0030145">
    <property type="term" value="F:manganese ion binding"/>
    <property type="evidence" value="ECO:0007669"/>
    <property type="project" value="UniProtKB-UniRule"/>
</dbReference>
<dbReference type="FunFam" id="3.10.310.20:FF:000001">
    <property type="entry name" value="Probable manganese-dependent inorganic pyrophosphatase"/>
    <property type="match status" value="1"/>
</dbReference>
<dbReference type="FunFam" id="3.90.1640.10:FF:000001">
    <property type="entry name" value="Probable manganese-dependent inorganic pyrophosphatase"/>
    <property type="match status" value="1"/>
</dbReference>
<dbReference type="Gene3D" id="3.10.310.20">
    <property type="entry name" value="DHHA2 domain"/>
    <property type="match status" value="1"/>
</dbReference>
<dbReference type="Gene3D" id="3.90.1640.10">
    <property type="entry name" value="inorganic pyrophosphatase (n-terminal core)"/>
    <property type="match status" value="1"/>
</dbReference>
<dbReference type="HAMAP" id="MF_00207">
    <property type="entry name" value="PPase_C"/>
    <property type="match status" value="1"/>
</dbReference>
<dbReference type="InterPro" id="IPR001667">
    <property type="entry name" value="DDH_dom"/>
</dbReference>
<dbReference type="InterPro" id="IPR038763">
    <property type="entry name" value="DHH_sf"/>
</dbReference>
<dbReference type="InterPro" id="IPR004097">
    <property type="entry name" value="DHHA2"/>
</dbReference>
<dbReference type="InterPro" id="IPR038222">
    <property type="entry name" value="DHHA2_dom_sf"/>
</dbReference>
<dbReference type="InterPro" id="IPR022934">
    <property type="entry name" value="Mn-dep_inorganic_PyrPase"/>
</dbReference>
<dbReference type="NCBIfam" id="NF003877">
    <property type="entry name" value="PRK05427.1"/>
    <property type="match status" value="1"/>
</dbReference>
<dbReference type="PANTHER" id="PTHR12112">
    <property type="entry name" value="BNIP - RELATED"/>
    <property type="match status" value="1"/>
</dbReference>
<dbReference type="PANTHER" id="PTHR12112:SF22">
    <property type="entry name" value="MANGANESE-DEPENDENT INORGANIC PYROPHOSPHATASE-RELATED"/>
    <property type="match status" value="1"/>
</dbReference>
<dbReference type="Pfam" id="PF01368">
    <property type="entry name" value="DHH"/>
    <property type="match status" value="1"/>
</dbReference>
<dbReference type="Pfam" id="PF02833">
    <property type="entry name" value="DHHA2"/>
    <property type="match status" value="1"/>
</dbReference>
<dbReference type="SMART" id="SM01131">
    <property type="entry name" value="DHHA2"/>
    <property type="match status" value="1"/>
</dbReference>
<dbReference type="SUPFAM" id="SSF64182">
    <property type="entry name" value="DHH phosphoesterases"/>
    <property type="match status" value="1"/>
</dbReference>
<keyword id="KW-0963">Cytoplasm</keyword>
<keyword id="KW-0378">Hydrolase</keyword>
<keyword id="KW-0464">Manganese</keyword>
<keyword id="KW-0479">Metal-binding</keyword>
<name>PPAC_LISIN</name>
<sequence length="308" mass="33645">MTKTLVFGHKNPDTDTICSAISYAELKKAQGADIEAVRLGELNSETAFVLDYFQVTAPRLVETVANEVSEVALVDHNERQQSVDDIDDVTVVAVVDHHRIANFETSDPLYYRAEPVGCTTTILLKMFRENEVEVSKTVAGLMLSAIISDTLLFQSPTCTEEDKVAAEKLALIADVDIQAYGMEMLKAGADVSKKTVAELLLDAKEFNMNGSKVEIAQINVVDVNDVLSRRAEVEALMTQNIVDKGLDLYLFVITNILTNDSVGIAIGSKTAVVEEAYGVKFVENQAPLKGVVSRKKQVVPILTDTFAK</sequence>
<protein>
    <recommendedName>
        <fullName evidence="1">Probable manganese-dependent inorganic pyrophosphatase</fullName>
        <ecNumber evidence="1">3.6.1.1</ecNumber>
    </recommendedName>
    <alternativeName>
        <fullName evidence="1">Pyrophosphate phospho-hydrolase</fullName>
        <shortName evidence="1">PPase</shortName>
    </alternativeName>
</protein>
<feature type="chain" id="PRO_0000158575" description="Probable manganese-dependent inorganic pyrophosphatase">
    <location>
        <begin position="1"/>
        <end position="308"/>
    </location>
</feature>
<feature type="binding site" evidence="1">
    <location>
        <position position="9"/>
    </location>
    <ligand>
        <name>Mn(2+)</name>
        <dbReference type="ChEBI" id="CHEBI:29035"/>
        <label>1</label>
    </ligand>
</feature>
<feature type="binding site" evidence="1">
    <location>
        <position position="13"/>
    </location>
    <ligand>
        <name>Mn(2+)</name>
        <dbReference type="ChEBI" id="CHEBI:29035"/>
        <label>1</label>
    </ligand>
</feature>
<feature type="binding site" evidence="1">
    <location>
        <position position="15"/>
    </location>
    <ligand>
        <name>Mn(2+)</name>
        <dbReference type="ChEBI" id="CHEBI:29035"/>
        <label>2</label>
    </ligand>
</feature>
<feature type="binding site" evidence="1">
    <location>
        <position position="75"/>
    </location>
    <ligand>
        <name>Mn(2+)</name>
        <dbReference type="ChEBI" id="CHEBI:29035"/>
        <label>1</label>
    </ligand>
</feature>
<feature type="binding site" evidence="1">
    <location>
        <position position="75"/>
    </location>
    <ligand>
        <name>Mn(2+)</name>
        <dbReference type="ChEBI" id="CHEBI:29035"/>
        <label>2</label>
    </ligand>
</feature>
<feature type="binding site" evidence="1">
    <location>
        <position position="97"/>
    </location>
    <ligand>
        <name>Mn(2+)</name>
        <dbReference type="ChEBI" id="CHEBI:29035"/>
        <label>2</label>
    </ligand>
</feature>
<feature type="binding site" evidence="1">
    <location>
        <position position="149"/>
    </location>
    <ligand>
        <name>Mn(2+)</name>
        <dbReference type="ChEBI" id="CHEBI:29035"/>
        <label>2</label>
    </ligand>
</feature>